<accession>Q13571</accession>
<accession>Q13240</accession>
<accession>Q14698</accession>
<accession>Q3KP54</accession>
<protein>
    <recommendedName>
        <fullName>Lysosomal-associated transmembrane protein 5</fullName>
    </recommendedName>
    <alternativeName>
        <fullName>Lysosomal-associated multitransmembrane protein 5</fullName>
    </alternativeName>
    <alternativeName>
        <fullName>Retinoic acid-inducible E3 protein</fullName>
    </alternativeName>
</protein>
<gene>
    <name type="primary">LAPTM5</name>
    <name type="synonym">KIAA0085</name>
</gene>
<keyword id="KW-0458">Lysosome</keyword>
<keyword id="KW-0472">Membrane</keyword>
<keyword id="KW-0597">Phosphoprotein</keyword>
<keyword id="KW-1267">Proteomics identification</keyword>
<keyword id="KW-1185">Reference proteome</keyword>
<keyword id="KW-0812">Transmembrane</keyword>
<keyword id="KW-1133">Transmembrane helix</keyword>
<keyword id="KW-0813">Transport</keyword>
<feature type="chain" id="PRO_0000084357" description="Lysosomal-associated transmembrane protein 5">
    <location>
        <begin position="1"/>
        <end position="262"/>
    </location>
</feature>
<feature type="transmembrane region" description="Helical" evidence="2">
    <location>
        <begin position="19"/>
        <end position="39"/>
    </location>
</feature>
<feature type="transmembrane region" description="Helical" evidence="2">
    <location>
        <begin position="64"/>
        <end position="84"/>
    </location>
</feature>
<feature type="transmembrane region" description="Helical" evidence="2">
    <location>
        <begin position="92"/>
        <end position="112"/>
    </location>
</feature>
<feature type="transmembrane region" description="Helical" evidence="2">
    <location>
        <begin position="134"/>
        <end position="154"/>
    </location>
</feature>
<feature type="transmembrane region" description="Helical" evidence="2">
    <location>
        <begin position="184"/>
        <end position="204"/>
    </location>
</feature>
<feature type="modified residue" description="Phosphotyrosine" evidence="1">
    <location>
        <position position="259"/>
    </location>
</feature>
<feature type="sequence variant" id="VAR_053653" description="In dbSNP:rs35351292." evidence="3">
    <original>R</original>
    <variation>K</variation>
    <location>
        <position position="226"/>
    </location>
</feature>
<feature type="sequence conflict" description="In Ref. 2; AAA74018." evidence="5" ref="2">
    <original>T</original>
    <variation>D</variation>
    <location>
        <position position="249"/>
    </location>
</feature>
<comment type="function">
    <text evidence="4">May have a special functional role during embryogenesis and in adult hematopoietic cells.</text>
</comment>
<comment type="subunit">
    <text>Binds to ubiquitin.</text>
</comment>
<comment type="interaction">
    <interactant intactId="EBI-2865663">
        <id>Q13571</id>
    </interactant>
    <interactant intactId="EBI-11957045">
        <id>Q9NVV5-2</id>
        <label>AIG1</label>
    </interactant>
    <organismsDiffer>false</organismsDiffer>
    <experiments>3</experiments>
</comment>
<comment type="interaction">
    <interactant intactId="EBI-2865663">
        <id>Q13571</id>
    </interactant>
    <interactant intactId="EBI-12003442">
        <id>Q8WVX3-2</id>
        <label>C4orf3</label>
    </interactant>
    <organismsDiffer>false</organismsDiffer>
    <experiments>3</experiments>
</comment>
<comment type="interaction">
    <interactant intactId="EBI-2865663">
        <id>Q13571</id>
    </interactant>
    <interactant intactId="EBI-12256978">
        <id>Q8N6F1-2</id>
        <label>CLDN19</label>
    </interactant>
    <organismsDiffer>false</organismsDiffer>
    <experiments>3</experiments>
</comment>
<comment type="interaction">
    <interactant intactId="EBI-2865663">
        <id>Q13571</id>
    </interactant>
    <interactant intactId="EBI-1046040">
        <id>P00387</id>
        <label>CYB5R3</label>
    </interactant>
    <organismsDiffer>false</organismsDiffer>
    <experiments>3</experiments>
</comment>
<comment type="interaction">
    <interactant intactId="EBI-2865663">
        <id>Q13571</id>
    </interactant>
    <interactant intactId="EBI-10230179">
        <id>Q96F81</id>
        <label>DISP1</label>
    </interactant>
    <organismsDiffer>false</organismsDiffer>
    <experiments>3</experiments>
</comment>
<comment type="interaction">
    <interactant intactId="EBI-2865663">
        <id>Q13571</id>
    </interactant>
    <interactant intactId="EBI-702665">
        <id>P02724</id>
        <label>GYPA</label>
    </interactant>
    <organismsDiffer>false</organismsDiffer>
    <experiments>3</experiments>
</comment>
<comment type="interaction">
    <interactant intactId="EBI-2865663">
        <id>Q13571</id>
    </interactant>
    <interactant intactId="EBI-712096">
        <id>P30519</id>
        <label>HMOX2</label>
    </interactant>
    <organismsDiffer>false</organismsDiffer>
    <experiments>3</experiments>
</comment>
<comment type="interaction">
    <interactant intactId="EBI-2865663">
        <id>Q13571</id>
    </interactant>
    <interactant intactId="EBI-8503746">
        <id>Q9Y5U4</id>
        <label>INSIG2</label>
    </interactant>
    <organismsDiffer>false</organismsDiffer>
    <experiments>3</experiments>
</comment>
<comment type="interaction">
    <interactant intactId="EBI-2865663">
        <id>Q13571</id>
    </interactant>
    <interactant intactId="EBI-17272405">
        <id>Q8N743</id>
        <label>KIR3DL3</label>
    </interactant>
    <organismsDiffer>false</organismsDiffer>
    <experiments>3</experiments>
</comment>
<comment type="interaction">
    <interactant intactId="EBI-2865663">
        <id>Q13571</id>
    </interactant>
    <interactant intactId="EBI-10173166">
        <id>Q5T700</id>
        <label>LDLRAD1</label>
    </interactant>
    <organismsDiffer>false</organismsDiffer>
    <experiments>3</experiments>
</comment>
<comment type="interaction">
    <interactant intactId="EBI-2865663">
        <id>Q13571</id>
    </interactant>
    <interactant intactId="EBI-2560240">
        <id>Q9H0U6</id>
        <label>MRPL18</label>
    </interactant>
    <organismsDiffer>false</organismsDiffer>
    <experiments>3</experiments>
</comment>
<comment type="interaction">
    <interactant intactId="EBI-2865663">
        <id>Q13571</id>
    </interactant>
    <interactant intactId="EBI-1052363">
        <id>Q9NS64</id>
        <label>RPRM</label>
    </interactant>
    <organismsDiffer>false</organismsDiffer>
    <experiments>3</experiments>
</comment>
<comment type="interaction">
    <interactant intactId="EBI-2865663">
        <id>Q13571</id>
    </interactant>
    <interactant intactId="EBI-10244780">
        <id>Q5QGT7</id>
        <label>RTP2</label>
    </interactant>
    <organismsDiffer>false</organismsDiffer>
    <experiments>3</experiments>
</comment>
<comment type="interaction">
    <interactant intactId="EBI-2865663">
        <id>Q13571</id>
    </interactant>
    <interactant intactId="EBI-988826">
        <id>Q9Y385</id>
        <label>UBE2J1</label>
    </interactant>
    <organismsDiffer>false</organismsDiffer>
    <experiments>3</experiments>
</comment>
<comment type="interaction">
    <interactant intactId="EBI-2865663">
        <id>Q13571</id>
    </interactant>
    <interactant intactId="EBI-12097582">
        <id>P23763-3</id>
        <label>VAMP1</label>
    </interactant>
    <organismsDiffer>false</organismsDiffer>
    <experiments>3</experiments>
</comment>
<comment type="subcellular location">
    <subcellularLocation>
        <location evidence="4">Lysosome membrane</location>
        <topology evidence="4">Multi-pass membrane protein</topology>
    </subcellularLocation>
</comment>
<comment type="tissue specificity">
    <text evidence="4">Preferentially expressed in adult hematopoietic tissues. High levels in lymphoid and myeloid tissues. Highly expressed in peripheral blood leukocytes, thymus, spleen and lung, followed by placenta, liver and kidney.</text>
</comment>
<comment type="induction">
    <text>By retinoic acid.</text>
</comment>
<comment type="similarity">
    <text evidence="5">Belongs to the LAPTM4/LAPTM5 transporter family.</text>
</comment>
<comment type="sequence caution" evidence="5">
    <conflict type="erroneous initiation">
        <sequence resource="EMBL-CDS" id="BAA07643"/>
    </conflict>
</comment>
<organism>
    <name type="scientific">Homo sapiens</name>
    <name type="common">Human</name>
    <dbReference type="NCBI Taxonomy" id="9606"/>
    <lineage>
        <taxon>Eukaryota</taxon>
        <taxon>Metazoa</taxon>
        <taxon>Chordata</taxon>
        <taxon>Craniata</taxon>
        <taxon>Vertebrata</taxon>
        <taxon>Euteleostomi</taxon>
        <taxon>Mammalia</taxon>
        <taxon>Eutheria</taxon>
        <taxon>Euarchontoglires</taxon>
        <taxon>Primates</taxon>
        <taxon>Haplorrhini</taxon>
        <taxon>Catarrhini</taxon>
        <taxon>Hominidae</taxon>
        <taxon>Homo</taxon>
    </lineage>
</organism>
<reference key="1">
    <citation type="journal article" date="1996" name="Genomics">
        <title>LAPTM5: a novel lysosomal-associated multispanning membrane protein preferentially expressed in hematopoietic cells.</title>
        <authorList>
            <person name="Adra C.N."/>
            <person name="Zhu S."/>
            <person name="Ko J.-L."/>
            <person name="Guillemot J.-C."/>
            <person name="Cuervo A.M."/>
            <person name="Kobayashi H."/>
            <person name="Horiuchi T."/>
            <person name="Lelias J.-M."/>
            <person name="Rowley J.D."/>
            <person name="Lim B."/>
        </authorList>
    </citation>
    <scope>NUCLEOTIDE SEQUENCE [MRNA]</scope>
    <scope>FUNCTION</scope>
    <scope>INTERACTION WITH UBIQUITIN</scope>
    <scope>SUBCELLULAR LOCATION</scope>
    <scope>TISSUE SPECIFICITY</scope>
    <source>
        <tissue>Spleen</tissue>
    </source>
</reference>
<reference key="2">
    <citation type="submission" date="1995-08" db="EMBL/GenBank/DDBJ databases">
        <authorList>
            <person name="Scott L.M."/>
            <person name="Collins S.J."/>
        </authorList>
    </citation>
    <scope>NUCLEOTIDE SEQUENCE [MRNA]</scope>
</reference>
<reference key="3">
    <citation type="journal article" date="1995" name="DNA Res.">
        <title>Prediction of the coding sequences of unidentified human genes. III. The coding sequences of 40 new genes (KIAA0081-KIAA0120) deduced by analysis of cDNA clones from human cell line KG-1.</title>
        <authorList>
            <person name="Nagase T."/>
            <person name="Miyajima N."/>
            <person name="Tanaka A."/>
            <person name="Sazuka T."/>
            <person name="Seki N."/>
            <person name="Sato S."/>
            <person name="Tabata S."/>
            <person name="Ishikawa K."/>
            <person name="Kawarabayasi Y."/>
            <person name="Kotani H."/>
            <person name="Nomura N."/>
        </authorList>
    </citation>
    <scope>NUCLEOTIDE SEQUENCE [LARGE SCALE MRNA]</scope>
    <source>
        <tissue>Bone marrow</tissue>
    </source>
</reference>
<reference key="4">
    <citation type="journal article" date="2004" name="Genome Res.">
        <title>The status, quality, and expansion of the NIH full-length cDNA project: the Mammalian Gene Collection (MGC).</title>
        <authorList>
            <consortium name="The MGC Project Team"/>
        </authorList>
    </citation>
    <scope>NUCLEOTIDE SEQUENCE [LARGE SCALE MRNA]</scope>
    <scope>VARIANT LYS-226</scope>
</reference>
<sequence>MDPRLSTVRQTCCCFNVRIATTALAIYHVIMSVLLFIEHSVEVAHGKASCKLSQMGYLRIADLISSFLLITMLFIISLSLLIGVVKNREKYLLPFLSLQIMDYLLCLLTLLGSYIELPAYLKLASRSRASSSKFPLMTLQLLDFCLSILTLCSSYMEVPTYLNFKSMNHMNYLPSQEDMPHNQFIKMMIIFSIAFITVLIFKVYMFKCVWRCYRLIKCMNSVEEKRNSKMLQKVVLPSYEEALSLPSKTPEGGPAPPPYSEV</sequence>
<evidence type="ECO:0000250" key="1">
    <source>
        <dbReference type="UniProtKB" id="Q61168"/>
    </source>
</evidence>
<evidence type="ECO:0000255" key="2"/>
<evidence type="ECO:0000269" key="3">
    <source>
    </source>
</evidence>
<evidence type="ECO:0000269" key="4">
    <source>
    </source>
</evidence>
<evidence type="ECO:0000305" key="5"/>
<proteinExistence type="evidence at protein level"/>
<dbReference type="EMBL" id="U51240">
    <property type="protein sequence ID" value="AAB08975.1"/>
    <property type="molecule type" value="mRNA"/>
</dbReference>
<dbReference type="EMBL" id="U30498">
    <property type="protein sequence ID" value="AAA74018.1"/>
    <property type="molecule type" value="mRNA"/>
</dbReference>
<dbReference type="EMBL" id="D42042">
    <property type="protein sequence ID" value="BAA07643.1"/>
    <property type="status" value="ALT_INIT"/>
    <property type="molecule type" value="mRNA"/>
</dbReference>
<dbReference type="EMBL" id="BC106896">
    <property type="protein sequence ID" value="AAI06897.1"/>
    <property type="molecule type" value="mRNA"/>
</dbReference>
<dbReference type="CCDS" id="CCDS337.1"/>
<dbReference type="PIR" id="G02476">
    <property type="entry name" value="G02476"/>
</dbReference>
<dbReference type="RefSeq" id="NP_006753.1">
    <property type="nucleotide sequence ID" value="NM_006762.3"/>
</dbReference>
<dbReference type="BioGRID" id="113580">
    <property type="interactions" value="58"/>
</dbReference>
<dbReference type="FunCoup" id="Q13571">
    <property type="interactions" value="295"/>
</dbReference>
<dbReference type="IntAct" id="Q13571">
    <property type="interactions" value="44"/>
</dbReference>
<dbReference type="MINT" id="Q13571"/>
<dbReference type="STRING" id="9606.ENSP00000294507"/>
<dbReference type="TCDB" id="2.A.74.1.4">
    <property type="family name" value="the 4 tms multidrug endosomal transporter (met) family"/>
</dbReference>
<dbReference type="iPTMnet" id="Q13571"/>
<dbReference type="PhosphoSitePlus" id="Q13571"/>
<dbReference type="SwissPalm" id="Q13571"/>
<dbReference type="BioMuta" id="LAPTM5"/>
<dbReference type="MassIVE" id="Q13571"/>
<dbReference type="PaxDb" id="9606-ENSP00000294507"/>
<dbReference type="PeptideAtlas" id="Q13571"/>
<dbReference type="ProteomicsDB" id="59574"/>
<dbReference type="Pumba" id="Q13571"/>
<dbReference type="Antibodypedia" id="54047">
    <property type="antibodies" value="90 antibodies from 18 providers"/>
</dbReference>
<dbReference type="DNASU" id="7805"/>
<dbReference type="Ensembl" id="ENST00000294507.4">
    <property type="protein sequence ID" value="ENSP00000294507.3"/>
    <property type="gene ID" value="ENSG00000162511.8"/>
</dbReference>
<dbReference type="GeneID" id="7805"/>
<dbReference type="KEGG" id="hsa:7805"/>
<dbReference type="MANE-Select" id="ENST00000294507.4">
    <property type="protein sequence ID" value="ENSP00000294507.3"/>
    <property type="RefSeq nucleotide sequence ID" value="NM_006762.3"/>
    <property type="RefSeq protein sequence ID" value="NP_006753.1"/>
</dbReference>
<dbReference type="AGR" id="HGNC:29612"/>
<dbReference type="CTD" id="7805"/>
<dbReference type="DisGeNET" id="7805"/>
<dbReference type="GeneCards" id="LAPTM5"/>
<dbReference type="HGNC" id="HGNC:29612">
    <property type="gene designation" value="LAPTM5"/>
</dbReference>
<dbReference type="HPA" id="ENSG00000162511">
    <property type="expression patterns" value="Tissue enhanced (bone marrow, lymphoid tissue)"/>
</dbReference>
<dbReference type="MIM" id="601476">
    <property type="type" value="gene"/>
</dbReference>
<dbReference type="neXtProt" id="NX_Q13571"/>
<dbReference type="OpenTargets" id="ENSG00000162511"/>
<dbReference type="PharmGKB" id="PA134953439"/>
<dbReference type="VEuPathDB" id="HostDB:ENSG00000162511"/>
<dbReference type="eggNOG" id="ENOG502RY9P">
    <property type="taxonomic scope" value="Eukaryota"/>
</dbReference>
<dbReference type="GeneTree" id="ENSGT00940000153446"/>
<dbReference type="HOGENOM" id="CLU_1065422_0_0_1"/>
<dbReference type="InParanoid" id="Q13571"/>
<dbReference type="OMA" id="QICCCFN"/>
<dbReference type="OrthoDB" id="8733516at2759"/>
<dbReference type="PAN-GO" id="Q13571">
    <property type="GO annotations" value="1 GO annotation based on evolutionary models"/>
</dbReference>
<dbReference type="PhylomeDB" id="Q13571"/>
<dbReference type="TreeFam" id="TF330843"/>
<dbReference type="PathwayCommons" id="Q13571"/>
<dbReference type="SignaLink" id="Q13571"/>
<dbReference type="SIGNOR" id="Q13571"/>
<dbReference type="BioGRID-ORCS" id="7805">
    <property type="hits" value="18 hits in 1154 CRISPR screens"/>
</dbReference>
<dbReference type="ChiTaRS" id="LAPTM5">
    <property type="organism name" value="human"/>
</dbReference>
<dbReference type="GenomeRNAi" id="7805"/>
<dbReference type="Pharos" id="Q13571">
    <property type="development level" value="Tbio"/>
</dbReference>
<dbReference type="PRO" id="PR:Q13571"/>
<dbReference type="Proteomes" id="UP000005640">
    <property type="component" value="Chromosome 1"/>
</dbReference>
<dbReference type="RNAct" id="Q13571">
    <property type="molecule type" value="protein"/>
</dbReference>
<dbReference type="Bgee" id="ENSG00000162511">
    <property type="expression patterns" value="Expressed in blood and 202 other cell types or tissues"/>
</dbReference>
<dbReference type="ExpressionAtlas" id="Q13571">
    <property type="expression patterns" value="baseline and differential"/>
</dbReference>
<dbReference type="GO" id="GO:0031410">
    <property type="term" value="C:cytoplasmic vesicle"/>
    <property type="evidence" value="ECO:0000314"/>
    <property type="project" value="ARUK-UCL"/>
</dbReference>
<dbReference type="GO" id="GO:0005829">
    <property type="term" value="C:cytosol"/>
    <property type="evidence" value="ECO:0007669"/>
    <property type="project" value="GOC"/>
</dbReference>
<dbReference type="GO" id="GO:0005765">
    <property type="term" value="C:lysosomal membrane"/>
    <property type="evidence" value="ECO:0000314"/>
    <property type="project" value="ARUK-UCL"/>
</dbReference>
<dbReference type="GO" id="GO:0005764">
    <property type="term" value="C:lysosome"/>
    <property type="evidence" value="ECO:0000314"/>
    <property type="project" value="ARUK-UCL"/>
</dbReference>
<dbReference type="GO" id="GO:0048471">
    <property type="term" value="C:perinuclear region of cytoplasm"/>
    <property type="evidence" value="ECO:0000314"/>
    <property type="project" value="ARUK-UCL"/>
</dbReference>
<dbReference type="GO" id="GO:0005886">
    <property type="term" value="C:plasma membrane"/>
    <property type="evidence" value="ECO:0000314"/>
    <property type="project" value="ARUK-UCL"/>
</dbReference>
<dbReference type="GO" id="GO:0032991">
    <property type="term" value="C:protein-containing complex"/>
    <property type="evidence" value="ECO:0000314"/>
    <property type="project" value="ARUK-UCL"/>
</dbReference>
<dbReference type="GO" id="GO:0030133">
    <property type="term" value="C:transport vesicle"/>
    <property type="evidence" value="ECO:0000314"/>
    <property type="project" value="ARUK-UCL"/>
</dbReference>
<dbReference type="GO" id="GO:0140311">
    <property type="term" value="F:protein sequestering activity"/>
    <property type="evidence" value="ECO:0000250"/>
    <property type="project" value="ARUK-UCL"/>
</dbReference>
<dbReference type="GO" id="GO:0031625">
    <property type="term" value="F:ubiquitin protein ligase binding"/>
    <property type="evidence" value="ECO:0000353"/>
    <property type="project" value="ARUK-UCL"/>
</dbReference>
<dbReference type="GO" id="GO:1990830">
    <property type="term" value="P:cellular response to leukemia inhibitory factor"/>
    <property type="evidence" value="ECO:0007669"/>
    <property type="project" value="Ensembl"/>
</dbReference>
<dbReference type="GO" id="GO:0002357">
    <property type="term" value="P:defense response to tumor cell"/>
    <property type="evidence" value="ECO:0000314"/>
    <property type="project" value="ARUK-UCL"/>
</dbReference>
<dbReference type="GO" id="GO:0090160">
    <property type="term" value="P:Golgi to lysosome transport"/>
    <property type="evidence" value="ECO:0000250"/>
    <property type="project" value="ARUK-UCL"/>
</dbReference>
<dbReference type="GO" id="GO:0012502">
    <property type="term" value="P:induction of programmed cell death"/>
    <property type="evidence" value="ECO:0000314"/>
    <property type="project" value="ARUK-UCL"/>
</dbReference>
<dbReference type="GO" id="GO:0006886">
    <property type="term" value="P:intracellular protein transport"/>
    <property type="evidence" value="ECO:0000250"/>
    <property type="project" value="ARUK-UCL"/>
</dbReference>
<dbReference type="GO" id="GO:0097193">
    <property type="term" value="P:intrinsic apoptotic signaling pathway"/>
    <property type="evidence" value="ECO:0000314"/>
    <property type="project" value="ARUK-UCL"/>
</dbReference>
<dbReference type="GO" id="GO:0046007">
    <property type="term" value="P:negative regulation of activated T cell proliferation"/>
    <property type="evidence" value="ECO:0007669"/>
    <property type="project" value="Ensembl"/>
</dbReference>
<dbReference type="GO" id="GO:1904093">
    <property type="term" value="P:negative regulation of autophagic cell death"/>
    <property type="evidence" value="ECO:0000314"/>
    <property type="project" value="ARUK-UCL"/>
</dbReference>
<dbReference type="GO" id="GO:0050869">
    <property type="term" value="P:negative regulation of B cell activation"/>
    <property type="evidence" value="ECO:0000250"/>
    <property type="project" value="ARUK-UCL"/>
</dbReference>
<dbReference type="GO" id="GO:0032703">
    <property type="term" value="P:negative regulation of interleukin-2 production"/>
    <property type="evidence" value="ECO:0000250"/>
    <property type="project" value="ARUK-UCL"/>
</dbReference>
<dbReference type="GO" id="GO:0140646">
    <property type="term" value="P:negative regulation of pre-B cell receptor expression"/>
    <property type="evidence" value="ECO:0007669"/>
    <property type="project" value="Ensembl"/>
</dbReference>
<dbReference type="GO" id="GO:0050868">
    <property type="term" value="P:negative regulation of T cell activation"/>
    <property type="evidence" value="ECO:0000250"/>
    <property type="project" value="ARUK-UCL"/>
</dbReference>
<dbReference type="GO" id="GO:0050860">
    <property type="term" value="P:negative regulation of T cell receptor signaling pathway"/>
    <property type="evidence" value="ECO:0000250"/>
    <property type="project" value="ARUK-UCL"/>
</dbReference>
<dbReference type="GO" id="GO:0032689">
    <property type="term" value="P:negative regulation of type II interferon production"/>
    <property type="evidence" value="ECO:0000250"/>
    <property type="project" value="ARUK-UCL"/>
</dbReference>
<dbReference type="GO" id="GO:0002720">
    <property type="term" value="P:positive regulation of cytokine production involved in immune response"/>
    <property type="evidence" value="ECO:0000250"/>
    <property type="project" value="ARUK-UCL"/>
</dbReference>
<dbReference type="GO" id="GO:0032735">
    <property type="term" value="P:positive regulation of interleukin-12 production"/>
    <property type="evidence" value="ECO:0000250"/>
    <property type="project" value="ARUK-UCL"/>
</dbReference>
<dbReference type="GO" id="GO:0032755">
    <property type="term" value="P:positive regulation of interleukin-6 production"/>
    <property type="evidence" value="ECO:0007669"/>
    <property type="project" value="Ensembl"/>
</dbReference>
<dbReference type="GO" id="GO:0097214">
    <property type="term" value="P:positive regulation of lysosomal membrane permeability"/>
    <property type="evidence" value="ECO:0000314"/>
    <property type="project" value="ARUK-UCL"/>
</dbReference>
<dbReference type="GO" id="GO:0060907">
    <property type="term" value="P:positive regulation of macrophage cytokine production"/>
    <property type="evidence" value="ECO:0000250"/>
    <property type="project" value="ARUK-UCL"/>
</dbReference>
<dbReference type="GO" id="GO:0043410">
    <property type="term" value="P:positive regulation of MAPK cascade"/>
    <property type="evidence" value="ECO:0000250"/>
    <property type="project" value="ARUK-UCL"/>
</dbReference>
<dbReference type="GO" id="GO:1901224">
    <property type="term" value="P:positive regulation of non-canonical NF-kappaB signal transduction"/>
    <property type="evidence" value="ECO:0000250"/>
    <property type="project" value="ARUK-UCL"/>
</dbReference>
<dbReference type="GO" id="GO:0031398">
    <property type="term" value="P:positive regulation of protein ubiquitination"/>
    <property type="evidence" value="ECO:0000250"/>
    <property type="project" value="ARUK-UCL"/>
</dbReference>
<dbReference type="GO" id="GO:2000646">
    <property type="term" value="P:positive regulation of receptor catabolic process"/>
    <property type="evidence" value="ECO:0000250"/>
    <property type="project" value="ARUK-UCL"/>
</dbReference>
<dbReference type="GO" id="GO:1903265">
    <property type="term" value="P:positive regulation of tumor necrosis factor-mediated signaling pathway"/>
    <property type="evidence" value="ECO:0000250"/>
    <property type="project" value="ARUK-UCL"/>
</dbReference>
<dbReference type="GO" id="GO:2000060">
    <property type="term" value="P:positive regulation of ubiquitin-dependent protein catabolic process"/>
    <property type="evidence" value="ECO:0000250"/>
    <property type="project" value="ARUK-UCL"/>
</dbReference>
<dbReference type="GO" id="GO:0006622">
    <property type="term" value="P:protein targeting to lysosome"/>
    <property type="evidence" value="ECO:0000250"/>
    <property type="project" value="ARUK-UCL"/>
</dbReference>
<dbReference type="InterPro" id="IPR004687">
    <property type="entry name" value="LAPTM4/5"/>
</dbReference>
<dbReference type="InterPro" id="IPR018396">
    <property type="entry name" value="LAPTM_4A/5"/>
</dbReference>
<dbReference type="InterPro" id="IPR051115">
    <property type="entry name" value="LAPTM_transporter"/>
</dbReference>
<dbReference type="NCBIfam" id="TIGR00799">
    <property type="entry name" value="mtp"/>
    <property type="match status" value="1"/>
</dbReference>
<dbReference type="PANTHER" id="PTHR12479">
    <property type="entry name" value="LYSOSOMAL-ASSOCIATED TRANSMEMBRANE PROTEIN"/>
    <property type="match status" value="1"/>
</dbReference>
<dbReference type="PANTHER" id="PTHR12479:SF2">
    <property type="entry name" value="LYSOSOMAL-ASSOCIATED TRANSMEMBRANE PROTEIN 5"/>
    <property type="match status" value="1"/>
</dbReference>
<dbReference type="Pfam" id="PF03821">
    <property type="entry name" value="Mtp"/>
    <property type="match status" value="1"/>
</dbReference>
<name>LAPM5_HUMAN</name>